<protein>
    <recommendedName>
        <fullName evidence="1">Glutamate--cysteine ligase</fullName>
        <ecNumber evidence="1">6.3.2.2</ecNumber>
    </recommendedName>
    <alternativeName>
        <fullName evidence="1">Gamma-ECS</fullName>
        <shortName evidence="1">GCS</shortName>
    </alternativeName>
    <alternativeName>
        <fullName evidence="1">Gamma-glutamylcysteine synthetase</fullName>
    </alternativeName>
</protein>
<organism>
    <name type="scientific">Pseudomonas savastanoi pv. phaseolicola (strain 1448A / Race 6)</name>
    <name type="common">Pseudomonas syringae pv. phaseolicola (strain 1448A / Race 6)</name>
    <dbReference type="NCBI Taxonomy" id="264730"/>
    <lineage>
        <taxon>Bacteria</taxon>
        <taxon>Pseudomonadati</taxon>
        <taxon>Pseudomonadota</taxon>
        <taxon>Gammaproteobacteria</taxon>
        <taxon>Pseudomonadales</taxon>
        <taxon>Pseudomonadaceae</taxon>
        <taxon>Pseudomonas</taxon>
    </lineage>
</organism>
<sequence>MKDYTLSELLNRRLALLGERNNLSLLEQCLHGIERECLRVTATAELAQTPHPQALGAALTNGQVTTDYSESLLEFITPALKNPAETIDSLDKIHRFAYSKLGDELLWSPSMPCPLPDEEHTPIAYYGTSNIGKLKYVYRKGLALRYGKTMQCIAGIHYNFSLPEDAWALLKQTEDFAGDARDYQSHSYIALIRNFRRYSWLLMYLFGASPALDAGFLRGRKHQLEQHFDADTLYLPYATSLRMSDLGYQSDAQADLTPCYNDLVSYTDSLRKAVATPYKPYVDVGTHDQNGEWVQLNTNVLQIENEYYSNIRPKRATYSGERPIQALVARGVQYVEVRCLDINPFLPTGISLEQSRFIDAFVLYCALEESQQLASHECSNASSNFLAVVKEGRRPGLSLQRNNSPVDLKTWATELLEKITPIARLLDQAQGIDEHIKSIAVQQAKIDDASLTPSAQVLASMKAHNEGFTAFSLRQSQAHAEYFRTHPLSAQEQADFEAQAKTSIEEQAELEATEEVVDFDTFVGSYQASILSISN</sequence>
<proteinExistence type="inferred from homology"/>
<keyword id="KW-0067">ATP-binding</keyword>
<keyword id="KW-0317">Glutathione biosynthesis</keyword>
<keyword id="KW-0436">Ligase</keyword>
<keyword id="KW-0547">Nucleotide-binding</keyword>
<comment type="catalytic activity">
    <reaction evidence="1">
        <text>L-cysteine + L-glutamate + ATP = gamma-L-glutamyl-L-cysteine + ADP + phosphate + H(+)</text>
        <dbReference type="Rhea" id="RHEA:13285"/>
        <dbReference type="ChEBI" id="CHEBI:15378"/>
        <dbReference type="ChEBI" id="CHEBI:29985"/>
        <dbReference type="ChEBI" id="CHEBI:30616"/>
        <dbReference type="ChEBI" id="CHEBI:35235"/>
        <dbReference type="ChEBI" id="CHEBI:43474"/>
        <dbReference type="ChEBI" id="CHEBI:58173"/>
        <dbReference type="ChEBI" id="CHEBI:456216"/>
        <dbReference type="EC" id="6.3.2.2"/>
    </reaction>
</comment>
<comment type="pathway">
    <text evidence="1">Sulfur metabolism; glutathione biosynthesis; glutathione from L-cysteine and L-glutamate: step 1/2.</text>
</comment>
<comment type="similarity">
    <text evidence="1">Belongs to the glutamate--cysteine ligase type 1 family. Type 1 subfamily.</text>
</comment>
<reference key="1">
    <citation type="journal article" date="2005" name="J. Bacteriol.">
        <title>Whole-genome sequence analysis of Pseudomonas syringae pv. phaseolicola 1448A reveals divergence among pathovars in genes involved in virulence and transposition.</title>
        <authorList>
            <person name="Joardar V."/>
            <person name="Lindeberg M."/>
            <person name="Jackson R.W."/>
            <person name="Selengut J."/>
            <person name="Dodson R."/>
            <person name="Brinkac L.M."/>
            <person name="Daugherty S.C."/>
            <person name="DeBoy R.T."/>
            <person name="Durkin A.S."/>
            <person name="Gwinn Giglio M."/>
            <person name="Madupu R."/>
            <person name="Nelson W.C."/>
            <person name="Rosovitz M.J."/>
            <person name="Sullivan S.A."/>
            <person name="Crabtree J."/>
            <person name="Creasy T."/>
            <person name="Davidsen T.M."/>
            <person name="Haft D.H."/>
            <person name="Zafar N."/>
            <person name="Zhou L."/>
            <person name="Halpin R."/>
            <person name="Holley T."/>
            <person name="Khouri H.M."/>
            <person name="Feldblyum T.V."/>
            <person name="White O."/>
            <person name="Fraser C.M."/>
            <person name="Chatterjee A.K."/>
            <person name="Cartinhour S."/>
            <person name="Schneider D."/>
            <person name="Mansfield J.W."/>
            <person name="Collmer A."/>
            <person name="Buell R."/>
        </authorList>
    </citation>
    <scope>NUCLEOTIDE SEQUENCE [LARGE SCALE GENOMIC DNA]</scope>
    <source>
        <strain>1448A / Race 6</strain>
    </source>
</reference>
<dbReference type="EC" id="6.3.2.2" evidence="1"/>
<dbReference type="EMBL" id="CP000058">
    <property type="protein sequence ID" value="AAZ34309.1"/>
    <property type="molecule type" value="Genomic_DNA"/>
</dbReference>
<dbReference type="SMR" id="Q48PX1"/>
<dbReference type="KEGG" id="psp:PSPPH_0243"/>
<dbReference type="eggNOG" id="COG2918">
    <property type="taxonomic scope" value="Bacteria"/>
</dbReference>
<dbReference type="HOGENOM" id="CLU_020728_3_0_6"/>
<dbReference type="UniPathway" id="UPA00142">
    <property type="reaction ID" value="UER00209"/>
</dbReference>
<dbReference type="Proteomes" id="UP000000551">
    <property type="component" value="Chromosome"/>
</dbReference>
<dbReference type="GO" id="GO:0005829">
    <property type="term" value="C:cytosol"/>
    <property type="evidence" value="ECO:0007669"/>
    <property type="project" value="TreeGrafter"/>
</dbReference>
<dbReference type="GO" id="GO:0005524">
    <property type="term" value="F:ATP binding"/>
    <property type="evidence" value="ECO:0007669"/>
    <property type="project" value="UniProtKB-KW"/>
</dbReference>
<dbReference type="GO" id="GO:0004357">
    <property type="term" value="F:glutamate-cysteine ligase activity"/>
    <property type="evidence" value="ECO:0007669"/>
    <property type="project" value="UniProtKB-UniRule"/>
</dbReference>
<dbReference type="GO" id="GO:0046872">
    <property type="term" value="F:metal ion binding"/>
    <property type="evidence" value="ECO:0007669"/>
    <property type="project" value="TreeGrafter"/>
</dbReference>
<dbReference type="GO" id="GO:0006750">
    <property type="term" value="P:glutathione biosynthetic process"/>
    <property type="evidence" value="ECO:0007669"/>
    <property type="project" value="UniProtKB-UniRule"/>
</dbReference>
<dbReference type="Gene3D" id="3.30.590.20">
    <property type="match status" value="1"/>
</dbReference>
<dbReference type="HAMAP" id="MF_00578">
    <property type="entry name" value="Glu_cys_ligase"/>
    <property type="match status" value="1"/>
</dbReference>
<dbReference type="InterPro" id="IPR014746">
    <property type="entry name" value="Gln_synth/guanido_kin_cat_dom"/>
</dbReference>
<dbReference type="InterPro" id="IPR007370">
    <property type="entry name" value="Glu_cys_ligase"/>
</dbReference>
<dbReference type="InterPro" id="IPR006334">
    <property type="entry name" value="Glut_cys_ligase"/>
</dbReference>
<dbReference type="NCBIfam" id="TIGR01434">
    <property type="entry name" value="glu_cys_ligase"/>
    <property type="match status" value="1"/>
</dbReference>
<dbReference type="PANTHER" id="PTHR38761">
    <property type="entry name" value="GLUTAMATE--CYSTEINE LIGASE"/>
    <property type="match status" value="1"/>
</dbReference>
<dbReference type="PANTHER" id="PTHR38761:SF1">
    <property type="entry name" value="GLUTAMATE--CYSTEINE LIGASE"/>
    <property type="match status" value="1"/>
</dbReference>
<dbReference type="Pfam" id="PF04262">
    <property type="entry name" value="Glu_cys_ligase"/>
    <property type="match status" value="1"/>
</dbReference>
<dbReference type="SUPFAM" id="SSF55931">
    <property type="entry name" value="Glutamine synthetase/guanido kinase"/>
    <property type="match status" value="1"/>
</dbReference>
<feature type="chain" id="PRO_1000025176" description="Glutamate--cysteine ligase">
    <location>
        <begin position="1"/>
        <end position="535"/>
    </location>
</feature>
<gene>
    <name evidence="1" type="primary">gshA</name>
    <name type="ordered locus">PSPPH_0243</name>
</gene>
<name>GSH1_PSE14</name>
<accession>Q48PX1</accession>
<evidence type="ECO:0000255" key="1">
    <source>
        <dbReference type="HAMAP-Rule" id="MF_00578"/>
    </source>
</evidence>